<feature type="chain" id="PRO_0000224440" description="Valine--tRNA ligase">
    <location>
        <begin position="1"/>
        <end position="907"/>
    </location>
</feature>
<feature type="coiled-coil region" evidence="1">
    <location>
        <begin position="838"/>
        <end position="870"/>
    </location>
</feature>
<feature type="short sequence motif" description="'HIGH' region">
    <location>
        <begin position="45"/>
        <end position="55"/>
    </location>
</feature>
<feature type="short sequence motif" description="'KMSKS' region">
    <location>
        <begin position="554"/>
        <end position="558"/>
    </location>
</feature>
<feature type="binding site" evidence="1">
    <location>
        <position position="557"/>
    </location>
    <ligand>
        <name>ATP</name>
        <dbReference type="ChEBI" id="CHEBI:30616"/>
    </ligand>
</feature>
<protein>
    <recommendedName>
        <fullName evidence="1">Valine--tRNA ligase</fullName>
        <ecNumber evidence="1">6.1.1.9</ecNumber>
    </recommendedName>
    <alternativeName>
        <fullName evidence="1">Valyl-tRNA synthetase</fullName>
        <shortName evidence="1">ValRS</shortName>
    </alternativeName>
</protein>
<proteinExistence type="inferred from homology"/>
<evidence type="ECO:0000255" key="1">
    <source>
        <dbReference type="HAMAP-Rule" id="MF_02004"/>
    </source>
</evidence>
<comment type="function">
    <text evidence="1">Catalyzes the attachment of valine to tRNA(Val). As ValRS can inadvertently accommodate and process structurally similar amino acids such as threonine, to avoid such errors, it has a 'posttransfer' editing activity that hydrolyzes mischarged Thr-tRNA(Val) in a tRNA-dependent manner.</text>
</comment>
<comment type="catalytic activity">
    <reaction evidence="1">
        <text>tRNA(Val) + L-valine + ATP = L-valyl-tRNA(Val) + AMP + diphosphate</text>
        <dbReference type="Rhea" id="RHEA:10704"/>
        <dbReference type="Rhea" id="RHEA-COMP:9672"/>
        <dbReference type="Rhea" id="RHEA-COMP:9708"/>
        <dbReference type="ChEBI" id="CHEBI:30616"/>
        <dbReference type="ChEBI" id="CHEBI:33019"/>
        <dbReference type="ChEBI" id="CHEBI:57762"/>
        <dbReference type="ChEBI" id="CHEBI:78442"/>
        <dbReference type="ChEBI" id="CHEBI:78537"/>
        <dbReference type="ChEBI" id="CHEBI:456215"/>
        <dbReference type="EC" id="6.1.1.9"/>
    </reaction>
</comment>
<comment type="subunit">
    <text evidence="1">Monomer.</text>
</comment>
<comment type="subcellular location">
    <subcellularLocation>
        <location evidence="1">Cytoplasm</location>
    </subcellularLocation>
</comment>
<comment type="domain">
    <text evidence="1">ValRS has two distinct active sites: one for aminoacylation and one for editing. The misactivated threonine is translocated from the active site to the editing site.</text>
</comment>
<comment type="domain">
    <text evidence="1">The C-terminal coiled-coil domain is crucial for aminoacylation activity.</text>
</comment>
<comment type="similarity">
    <text evidence="1">Belongs to the class-I aminoacyl-tRNA synthetase family. ValS type 1 subfamily.</text>
</comment>
<sequence length="907" mass="103385">MLEKNYDAASIEQRIAKKWEARGAFKAGMGSKSAAQSFCVMLPPPNVTGSLHMGHALNTTIQDIVVRFQRMRGKNVLWQPGMDHAGIATQMVVERQLAERQEPTRQEMGREKFVERIWEWRYETGGVIANQLRRLGVSCDWSRERFTMDDGLSEAVREVFVTLYKQGLIYRDKRLVNWDPKLLTAISDLEVEQKEVKGHLWHFRYPLEGKLFDPSDATTFITVATTRPETMLGDTGIAVNPEDDRYRNLIGQNAILPLVGRRLSIVADAYANPDEGSGAVKITPAHDFNDFEVGRRNNLRLINIFTEKAEVFLHENEAFFEGVVLSDALKMLVKDLDQKDRFIARDQIVSLMEEKGYLVTVDDHPHTVPYGDRSGVPIEPFLTDQWYVNAAELAKPAIEAVHQGKTQFIPDSWQKTYFNWMQNIQPWCVSRQLWWGHQIPAWYGPDGRVFVEKSEEEALNSALSHYGEVVNLTRDPDVLDTWFSSALWPFSTLGWPNKTPELATFYPTSLSVTGFDIIFFWVARMMMMGLHFMGEVPFPTVYVHALVRDQKGAKMSKSKGNIIDPLELIDQYSADSLRFTLAIMAAQGRDVKLDPSRIAGYRNFATKLWNATRFAQMNGVKHDPDFKPEKAKLALNRWILTELSKTVVAVTTGIENYKFNESASALYRFIWNTLCDWYLELLKPIFQGSNEDAKNEVQACTAWVLDEVYKLLHPFMPHMTEELWSLTETLGMKREDMLALIQWPEASFSDEEAASDINWLIDAVSAIRSVRFEMNIPAAALAPLVIVEGGELTLKRVELYESLLKKLARVETISFSDKAPALSAQMILGEAIFCLPLGQLIDLEAERARLMKDVSKIEQDIEKLSAKLSNPKFIENAKPEIVEVERNRIVELRTAQKKISLALERLV</sequence>
<reference key="1">
    <citation type="journal article" date="2004" name="Proc. Natl. Acad. Sci. U.S.A.">
        <title>The louse-borne human pathogen Bartonella quintana is a genomic derivative of the zoonotic agent Bartonella henselae.</title>
        <authorList>
            <person name="Alsmark U.C.M."/>
            <person name="Frank A.C."/>
            <person name="Karlberg E.O."/>
            <person name="Legault B.-A."/>
            <person name="Ardell D.H."/>
            <person name="Canbaeck B."/>
            <person name="Eriksson A.-S."/>
            <person name="Naeslund A.K."/>
            <person name="Handley S.A."/>
            <person name="Huvet M."/>
            <person name="La Scola B."/>
            <person name="Holmberg M."/>
            <person name="Andersson S.G.E."/>
        </authorList>
    </citation>
    <scope>NUCLEOTIDE SEQUENCE [LARGE SCALE GENOMIC DNA]</scope>
    <source>
        <strain>ATCC 49882 / DSM 28221 / CCUG 30454 / Houston 1</strain>
    </source>
</reference>
<name>SYV_BARHE</name>
<dbReference type="EC" id="6.1.1.9" evidence="1"/>
<dbReference type="EMBL" id="BX897699">
    <property type="protein sequence ID" value="CAF27854.1"/>
    <property type="molecule type" value="Genomic_DNA"/>
</dbReference>
<dbReference type="RefSeq" id="WP_011180924.1">
    <property type="nucleotide sequence ID" value="NZ_LRIJ02000001.1"/>
</dbReference>
<dbReference type="SMR" id="Q6G2V3"/>
<dbReference type="PaxDb" id="283166-BH10630"/>
<dbReference type="EnsemblBacteria" id="CAF27854">
    <property type="protein sequence ID" value="CAF27854"/>
    <property type="gene ID" value="BH10630"/>
</dbReference>
<dbReference type="KEGG" id="bhe:BH10630"/>
<dbReference type="eggNOG" id="COG0525">
    <property type="taxonomic scope" value="Bacteria"/>
</dbReference>
<dbReference type="OrthoDB" id="9810365at2"/>
<dbReference type="Proteomes" id="UP000000421">
    <property type="component" value="Chromosome"/>
</dbReference>
<dbReference type="GO" id="GO:0005829">
    <property type="term" value="C:cytosol"/>
    <property type="evidence" value="ECO:0007669"/>
    <property type="project" value="TreeGrafter"/>
</dbReference>
<dbReference type="GO" id="GO:0002161">
    <property type="term" value="F:aminoacyl-tRNA deacylase activity"/>
    <property type="evidence" value="ECO:0007669"/>
    <property type="project" value="InterPro"/>
</dbReference>
<dbReference type="GO" id="GO:0005524">
    <property type="term" value="F:ATP binding"/>
    <property type="evidence" value="ECO:0007669"/>
    <property type="project" value="UniProtKB-UniRule"/>
</dbReference>
<dbReference type="GO" id="GO:0004832">
    <property type="term" value="F:valine-tRNA ligase activity"/>
    <property type="evidence" value="ECO:0007669"/>
    <property type="project" value="UniProtKB-UniRule"/>
</dbReference>
<dbReference type="GO" id="GO:0006438">
    <property type="term" value="P:valyl-tRNA aminoacylation"/>
    <property type="evidence" value="ECO:0007669"/>
    <property type="project" value="UniProtKB-UniRule"/>
</dbReference>
<dbReference type="CDD" id="cd07962">
    <property type="entry name" value="Anticodon_Ia_Val"/>
    <property type="match status" value="1"/>
</dbReference>
<dbReference type="CDD" id="cd00817">
    <property type="entry name" value="ValRS_core"/>
    <property type="match status" value="1"/>
</dbReference>
<dbReference type="FunFam" id="1.10.287.380:FF:000001">
    <property type="entry name" value="Valine--tRNA ligase"/>
    <property type="match status" value="1"/>
</dbReference>
<dbReference type="FunFam" id="3.40.50.620:FF:000032">
    <property type="entry name" value="Valine--tRNA ligase"/>
    <property type="match status" value="1"/>
</dbReference>
<dbReference type="FunFam" id="3.40.50.620:FF:000078">
    <property type="entry name" value="Valine--tRNA ligase, mitochondrial"/>
    <property type="match status" value="1"/>
</dbReference>
<dbReference type="Gene3D" id="3.40.50.620">
    <property type="entry name" value="HUPs"/>
    <property type="match status" value="2"/>
</dbReference>
<dbReference type="Gene3D" id="1.10.730.10">
    <property type="entry name" value="Isoleucyl-tRNA Synthetase, Domain 1"/>
    <property type="match status" value="1"/>
</dbReference>
<dbReference type="Gene3D" id="1.10.287.380">
    <property type="entry name" value="Valyl-tRNA synthetase, C-terminal domain"/>
    <property type="match status" value="1"/>
</dbReference>
<dbReference type="Gene3D" id="3.90.740.10">
    <property type="entry name" value="Valyl/Leucyl/Isoleucyl-tRNA synthetase, editing domain"/>
    <property type="match status" value="1"/>
</dbReference>
<dbReference type="HAMAP" id="MF_02004">
    <property type="entry name" value="Val_tRNA_synth_type1"/>
    <property type="match status" value="1"/>
</dbReference>
<dbReference type="InterPro" id="IPR001412">
    <property type="entry name" value="aa-tRNA-synth_I_CS"/>
</dbReference>
<dbReference type="InterPro" id="IPR002300">
    <property type="entry name" value="aa-tRNA-synth_Ia"/>
</dbReference>
<dbReference type="InterPro" id="IPR033705">
    <property type="entry name" value="Anticodon_Ia_Val"/>
</dbReference>
<dbReference type="InterPro" id="IPR013155">
    <property type="entry name" value="M/V/L/I-tRNA-synth_anticd-bd"/>
</dbReference>
<dbReference type="InterPro" id="IPR014729">
    <property type="entry name" value="Rossmann-like_a/b/a_fold"/>
</dbReference>
<dbReference type="InterPro" id="IPR010978">
    <property type="entry name" value="tRNA-bd_arm"/>
</dbReference>
<dbReference type="InterPro" id="IPR009080">
    <property type="entry name" value="tRNAsynth_Ia_anticodon-bd"/>
</dbReference>
<dbReference type="InterPro" id="IPR037118">
    <property type="entry name" value="Val-tRNA_synth_C_sf"/>
</dbReference>
<dbReference type="InterPro" id="IPR019499">
    <property type="entry name" value="Val-tRNA_synth_tRNA-bd"/>
</dbReference>
<dbReference type="InterPro" id="IPR009008">
    <property type="entry name" value="Val/Leu/Ile-tRNA-synth_edit"/>
</dbReference>
<dbReference type="InterPro" id="IPR002303">
    <property type="entry name" value="Valyl-tRNA_ligase"/>
</dbReference>
<dbReference type="NCBIfam" id="NF004349">
    <property type="entry name" value="PRK05729.1"/>
    <property type="match status" value="1"/>
</dbReference>
<dbReference type="NCBIfam" id="TIGR00422">
    <property type="entry name" value="valS"/>
    <property type="match status" value="1"/>
</dbReference>
<dbReference type="PANTHER" id="PTHR11946:SF93">
    <property type="entry name" value="VALINE--TRNA LIGASE, CHLOROPLASTIC_MITOCHONDRIAL 2"/>
    <property type="match status" value="1"/>
</dbReference>
<dbReference type="PANTHER" id="PTHR11946">
    <property type="entry name" value="VALYL-TRNA SYNTHETASES"/>
    <property type="match status" value="1"/>
</dbReference>
<dbReference type="Pfam" id="PF08264">
    <property type="entry name" value="Anticodon_1"/>
    <property type="match status" value="1"/>
</dbReference>
<dbReference type="Pfam" id="PF00133">
    <property type="entry name" value="tRNA-synt_1"/>
    <property type="match status" value="1"/>
</dbReference>
<dbReference type="Pfam" id="PF10458">
    <property type="entry name" value="Val_tRNA-synt_C"/>
    <property type="match status" value="1"/>
</dbReference>
<dbReference type="PRINTS" id="PR00986">
    <property type="entry name" value="TRNASYNTHVAL"/>
</dbReference>
<dbReference type="SUPFAM" id="SSF47323">
    <property type="entry name" value="Anticodon-binding domain of a subclass of class I aminoacyl-tRNA synthetases"/>
    <property type="match status" value="1"/>
</dbReference>
<dbReference type="SUPFAM" id="SSF52374">
    <property type="entry name" value="Nucleotidylyl transferase"/>
    <property type="match status" value="1"/>
</dbReference>
<dbReference type="SUPFAM" id="SSF46589">
    <property type="entry name" value="tRNA-binding arm"/>
    <property type="match status" value="1"/>
</dbReference>
<dbReference type="SUPFAM" id="SSF50677">
    <property type="entry name" value="ValRS/IleRS/LeuRS editing domain"/>
    <property type="match status" value="1"/>
</dbReference>
<dbReference type="PROSITE" id="PS00178">
    <property type="entry name" value="AA_TRNA_LIGASE_I"/>
    <property type="match status" value="1"/>
</dbReference>
<keyword id="KW-0030">Aminoacyl-tRNA synthetase</keyword>
<keyword id="KW-0067">ATP-binding</keyword>
<keyword id="KW-0175">Coiled coil</keyword>
<keyword id="KW-0963">Cytoplasm</keyword>
<keyword id="KW-0436">Ligase</keyword>
<keyword id="KW-0547">Nucleotide-binding</keyword>
<keyword id="KW-0648">Protein biosynthesis</keyword>
<gene>
    <name evidence="1" type="primary">valS</name>
    <name type="ordered locus">BH10630</name>
</gene>
<organism>
    <name type="scientific">Bartonella henselae (strain ATCC 49882 / DSM 28221 / CCUG 30454 / Houston 1)</name>
    <name type="common">Rochalimaea henselae</name>
    <dbReference type="NCBI Taxonomy" id="283166"/>
    <lineage>
        <taxon>Bacteria</taxon>
        <taxon>Pseudomonadati</taxon>
        <taxon>Pseudomonadota</taxon>
        <taxon>Alphaproteobacteria</taxon>
        <taxon>Hyphomicrobiales</taxon>
        <taxon>Bartonellaceae</taxon>
        <taxon>Bartonella</taxon>
    </lineage>
</organism>
<accession>Q6G2V3</accession>